<sequence>MNEKIAVVTDSTTYLPDEVKEQLRINVVPLSVIIDGKSYREGEELSTADFYKKVKEAENFPTSSQPAPGEFIQLFEKLKEQGFDTVISIHLSSGISGTFQNAASAGELIDGLNVVAYDSELSCMAQGMFAVKAAEMALANEPLERIISELDKIKKAQDAYFMVDDLNNLQRGGRLNGAQALVGSLLQIKPILHFNDKQIVLFEKVRTQKKALKRIEDILEVAIKNKNAEKAYVIHGNDPEKGETWRKHLESKFPEVEFELSYFGPVIGTHLGEGALGLTWSIK</sequence>
<gene>
    <name type="ordered locus">lin2658</name>
</gene>
<comment type="function">
    <text evidence="1">May bind long-chain fatty acids, such as palmitate, and may play a role in lipid transport or fatty acid metabolism.</text>
</comment>
<dbReference type="EMBL" id="AL596173">
    <property type="protein sequence ID" value="CAC97884.1"/>
    <property type="molecule type" value="Genomic_DNA"/>
</dbReference>
<dbReference type="PIR" id="AD1764">
    <property type="entry name" value="AD1764"/>
</dbReference>
<dbReference type="RefSeq" id="WP_003763963.1">
    <property type="nucleotide sequence ID" value="NC_003212.1"/>
</dbReference>
<dbReference type="SMR" id="Q927X9"/>
<dbReference type="STRING" id="272626.gene:17567038"/>
<dbReference type="GeneID" id="93235921"/>
<dbReference type="KEGG" id="lin:lin2658"/>
<dbReference type="eggNOG" id="COG1307">
    <property type="taxonomic scope" value="Bacteria"/>
</dbReference>
<dbReference type="HOGENOM" id="CLU_048251_3_1_9"/>
<dbReference type="Proteomes" id="UP000002513">
    <property type="component" value="Chromosome"/>
</dbReference>
<dbReference type="GO" id="GO:0008289">
    <property type="term" value="F:lipid binding"/>
    <property type="evidence" value="ECO:0007669"/>
    <property type="project" value="UniProtKB-KW"/>
</dbReference>
<dbReference type="Gene3D" id="3.30.1180.10">
    <property type="match status" value="1"/>
</dbReference>
<dbReference type="Gene3D" id="3.40.50.10170">
    <property type="match status" value="1"/>
</dbReference>
<dbReference type="InterPro" id="IPR003797">
    <property type="entry name" value="DegV"/>
</dbReference>
<dbReference type="InterPro" id="IPR043168">
    <property type="entry name" value="DegV_C"/>
</dbReference>
<dbReference type="InterPro" id="IPR050270">
    <property type="entry name" value="DegV_domain_contain"/>
</dbReference>
<dbReference type="NCBIfam" id="TIGR00762">
    <property type="entry name" value="DegV"/>
    <property type="match status" value="1"/>
</dbReference>
<dbReference type="PANTHER" id="PTHR33434">
    <property type="entry name" value="DEGV DOMAIN-CONTAINING PROTEIN DR_1986-RELATED"/>
    <property type="match status" value="1"/>
</dbReference>
<dbReference type="PANTHER" id="PTHR33434:SF2">
    <property type="entry name" value="FATTY ACID-BINDING PROTEIN TM_1468"/>
    <property type="match status" value="1"/>
</dbReference>
<dbReference type="Pfam" id="PF02645">
    <property type="entry name" value="DegV"/>
    <property type="match status" value="1"/>
</dbReference>
<dbReference type="SUPFAM" id="SSF82549">
    <property type="entry name" value="DAK1/DegV-like"/>
    <property type="match status" value="1"/>
</dbReference>
<dbReference type="PROSITE" id="PS51482">
    <property type="entry name" value="DEGV"/>
    <property type="match status" value="1"/>
</dbReference>
<reference key="1">
    <citation type="journal article" date="2001" name="Science">
        <title>Comparative genomics of Listeria species.</title>
        <authorList>
            <person name="Glaser P."/>
            <person name="Frangeul L."/>
            <person name="Buchrieser C."/>
            <person name="Rusniok C."/>
            <person name="Amend A."/>
            <person name="Baquero F."/>
            <person name="Berche P."/>
            <person name="Bloecker H."/>
            <person name="Brandt P."/>
            <person name="Chakraborty T."/>
            <person name="Charbit A."/>
            <person name="Chetouani F."/>
            <person name="Couve E."/>
            <person name="de Daruvar A."/>
            <person name="Dehoux P."/>
            <person name="Domann E."/>
            <person name="Dominguez-Bernal G."/>
            <person name="Duchaud E."/>
            <person name="Durant L."/>
            <person name="Dussurget O."/>
            <person name="Entian K.-D."/>
            <person name="Fsihi H."/>
            <person name="Garcia-del Portillo F."/>
            <person name="Garrido P."/>
            <person name="Gautier L."/>
            <person name="Goebel W."/>
            <person name="Gomez-Lopez N."/>
            <person name="Hain T."/>
            <person name="Hauf J."/>
            <person name="Jackson D."/>
            <person name="Jones L.-M."/>
            <person name="Kaerst U."/>
            <person name="Kreft J."/>
            <person name="Kuhn M."/>
            <person name="Kunst F."/>
            <person name="Kurapkat G."/>
            <person name="Madueno E."/>
            <person name="Maitournam A."/>
            <person name="Mata Vicente J."/>
            <person name="Ng E."/>
            <person name="Nedjari H."/>
            <person name="Nordsiek G."/>
            <person name="Novella S."/>
            <person name="de Pablos B."/>
            <person name="Perez-Diaz J.-C."/>
            <person name="Purcell R."/>
            <person name="Remmel B."/>
            <person name="Rose M."/>
            <person name="Schlueter T."/>
            <person name="Simoes N."/>
            <person name="Tierrez A."/>
            <person name="Vazquez-Boland J.-A."/>
            <person name="Voss H."/>
            <person name="Wehland J."/>
            <person name="Cossart P."/>
        </authorList>
    </citation>
    <scope>NUCLEOTIDE SEQUENCE [LARGE SCALE GENOMIC DNA]</scope>
    <source>
        <strain>ATCC BAA-680 / CLIP 11262</strain>
    </source>
</reference>
<organism>
    <name type="scientific">Listeria innocua serovar 6a (strain ATCC BAA-680 / CLIP 11262)</name>
    <dbReference type="NCBI Taxonomy" id="272626"/>
    <lineage>
        <taxon>Bacteria</taxon>
        <taxon>Bacillati</taxon>
        <taxon>Bacillota</taxon>
        <taxon>Bacilli</taxon>
        <taxon>Bacillales</taxon>
        <taxon>Listeriaceae</taxon>
        <taxon>Listeria</taxon>
    </lineage>
</organism>
<keyword id="KW-0446">Lipid-binding</keyword>
<name>Y2658_LISIN</name>
<proteinExistence type="inferred from homology"/>
<feature type="chain" id="PRO_0000209769" description="DegV domain-containing protein lin2658">
    <location>
        <begin position="1"/>
        <end position="283"/>
    </location>
</feature>
<feature type="domain" description="DegV" evidence="3">
    <location>
        <begin position="5"/>
        <end position="282"/>
    </location>
</feature>
<feature type="binding site" evidence="2">
    <location>
        <position position="63"/>
    </location>
    <ligand>
        <name>hexadecanoate</name>
        <dbReference type="ChEBI" id="CHEBI:7896"/>
    </ligand>
</feature>
<feature type="binding site" evidence="2">
    <location>
        <position position="96"/>
    </location>
    <ligand>
        <name>hexadecanoate</name>
        <dbReference type="ChEBI" id="CHEBI:7896"/>
    </ligand>
</feature>
<accession>Q927X9</accession>
<protein>
    <recommendedName>
        <fullName>DegV domain-containing protein lin2658</fullName>
    </recommendedName>
</protein>
<evidence type="ECO:0000250" key="1"/>
<evidence type="ECO:0000250" key="2">
    <source>
        <dbReference type="UniProtKB" id="Q9X1H9"/>
    </source>
</evidence>
<evidence type="ECO:0000255" key="3">
    <source>
        <dbReference type="PROSITE-ProRule" id="PRU00815"/>
    </source>
</evidence>